<proteinExistence type="inferred from homology"/>
<accession>Q5B6C7</accession>
<accession>C8V6A3</accession>
<evidence type="ECO:0000250" key="1"/>
<evidence type="ECO:0000255" key="2"/>
<evidence type="ECO:0000255" key="3">
    <source>
        <dbReference type="PROSITE-ProRule" id="PRU01164"/>
    </source>
</evidence>
<evidence type="ECO:0000305" key="4"/>
<reference key="1">
    <citation type="journal article" date="2005" name="Nature">
        <title>Sequencing of Aspergillus nidulans and comparative analysis with A. fumigatus and A. oryzae.</title>
        <authorList>
            <person name="Galagan J.E."/>
            <person name="Calvo S.E."/>
            <person name="Cuomo C."/>
            <person name="Ma L.-J."/>
            <person name="Wortman J.R."/>
            <person name="Batzoglou S."/>
            <person name="Lee S.-I."/>
            <person name="Bastuerkmen M."/>
            <person name="Spevak C.C."/>
            <person name="Clutterbuck J."/>
            <person name="Kapitonov V."/>
            <person name="Jurka J."/>
            <person name="Scazzocchio C."/>
            <person name="Farman M.L."/>
            <person name="Butler J."/>
            <person name="Purcell S."/>
            <person name="Harris S."/>
            <person name="Braus G.H."/>
            <person name="Draht O."/>
            <person name="Busch S."/>
            <person name="D'Enfert C."/>
            <person name="Bouchier C."/>
            <person name="Goldman G.H."/>
            <person name="Bell-Pedersen D."/>
            <person name="Griffiths-Jones S."/>
            <person name="Doonan J.H."/>
            <person name="Yu J."/>
            <person name="Vienken K."/>
            <person name="Pain A."/>
            <person name="Freitag M."/>
            <person name="Selker E.U."/>
            <person name="Archer D.B."/>
            <person name="Penalva M.A."/>
            <person name="Oakley B.R."/>
            <person name="Momany M."/>
            <person name="Tanaka T."/>
            <person name="Kumagai T."/>
            <person name="Asai K."/>
            <person name="Machida M."/>
            <person name="Nierman W.C."/>
            <person name="Denning D.W."/>
            <person name="Caddick M.X."/>
            <person name="Hynes M."/>
            <person name="Paoletti M."/>
            <person name="Fischer R."/>
            <person name="Miller B.L."/>
            <person name="Dyer P.S."/>
            <person name="Sachs M.S."/>
            <person name="Osmani S.A."/>
            <person name="Birren B.W."/>
        </authorList>
    </citation>
    <scope>NUCLEOTIDE SEQUENCE [LARGE SCALE GENOMIC DNA]</scope>
    <source>
        <strain>FGSC A4 / ATCC 38163 / CBS 112.46 / NRRL 194 / M139</strain>
    </source>
</reference>
<reference key="2">
    <citation type="journal article" date="2009" name="Fungal Genet. Biol.">
        <title>The 2008 update of the Aspergillus nidulans genome annotation: a community effort.</title>
        <authorList>
            <person name="Wortman J.R."/>
            <person name="Gilsenan J.M."/>
            <person name="Joardar V."/>
            <person name="Deegan J."/>
            <person name="Clutterbuck J."/>
            <person name="Andersen M.R."/>
            <person name="Archer D."/>
            <person name="Bencina M."/>
            <person name="Braus G."/>
            <person name="Coutinho P."/>
            <person name="von Dohren H."/>
            <person name="Doonan J."/>
            <person name="Driessen A.J."/>
            <person name="Durek P."/>
            <person name="Espeso E."/>
            <person name="Fekete E."/>
            <person name="Flipphi M."/>
            <person name="Estrada C.G."/>
            <person name="Geysens S."/>
            <person name="Goldman G."/>
            <person name="de Groot P.W."/>
            <person name="Hansen K."/>
            <person name="Harris S.D."/>
            <person name="Heinekamp T."/>
            <person name="Helmstaedt K."/>
            <person name="Henrissat B."/>
            <person name="Hofmann G."/>
            <person name="Homan T."/>
            <person name="Horio T."/>
            <person name="Horiuchi H."/>
            <person name="James S."/>
            <person name="Jones M."/>
            <person name="Karaffa L."/>
            <person name="Karanyi Z."/>
            <person name="Kato M."/>
            <person name="Keller N."/>
            <person name="Kelly D.E."/>
            <person name="Kiel J.A."/>
            <person name="Kim J.M."/>
            <person name="van der Klei I.J."/>
            <person name="Klis F.M."/>
            <person name="Kovalchuk A."/>
            <person name="Krasevec N."/>
            <person name="Kubicek C.P."/>
            <person name="Liu B."/>
            <person name="Maccabe A."/>
            <person name="Meyer V."/>
            <person name="Mirabito P."/>
            <person name="Miskei M."/>
            <person name="Mos M."/>
            <person name="Mullins J."/>
            <person name="Nelson D.R."/>
            <person name="Nielsen J."/>
            <person name="Oakley B.R."/>
            <person name="Osmani S.A."/>
            <person name="Pakula T."/>
            <person name="Paszewski A."/>
            <person name="Paulsen I."/>
            <person name="Pilsyk S."/>
            <person name="Pocsi I."/>
            <person name="Punt P.J."/>
            <person name="Ram A.F."/>
            <person name="Ren Q."/>
            <person name="Robellet X."/>
            <person name="Robson G."/>
            <person name="Seiboth B."/>
            <person name="van Solingen P."/>
            <person name="Specht T."/>
            <person name="Sun J."/>
            <person name="Taheri-Talesh N."/>
            <person name="Takeshita N."/>
            <person name="Ussery D."/>
            <person name="vanKuyk P.A."/>
            <person name="Visser H."/>
            <person name="van de Vondervoort P.J."/>
            <person name="de Vries R.P."/>
            <person name="Walton J."/>
            <person name="Xiang X."/>
            <person name="Xiong Y."/>
            <person name="Zeng A.P."/>
            <person name="Brandt B.W."/>
            <person name="Cornell M.J."/>
            <person name="van den Hondel C.A."/>
            <person name="Visser J."/>
            <person name="Oliver S.G."/>
            <person name="Turner G."/>
        </authorList>
    </citation>
    <scope>GENOME REANNOTATION</scope>
    <source>
        <strain>FGSC A4 / ATCC 38163 / CBS 112.46 / NRRL 194 / M139</strain>
    </source>
</reference>
<keyword id="KW-0119">Carbohydrate metabolism</keyword>
<keyword id="KW-0136">Cellulose degradation</keyword>
<keyword id="KW-0325">Glycoprotein</keyword>
<keyword id="KW-0326">Glycosidase</keyword>
<keyword id="KW-0378">Hydrolase</keyword>
<keyword id="KW-0624">Polysaccharide degradation</keyword>
<keyword id="KW-1185">Reference proteome</keyword>
<keyword id="KW-0964">Secreted</keyword>
<dbReference type="EC" id="3.2.1.21"/>
<dbReference type="EMBL" id="AACD01000063">
    <property type="protein sequence ID" value="EAA58834.1"/>
    <property type="status" value="ALT_SEQ"/>
    <property type="molecule type" value="Genomic_DNA"/>
</dbReference>
<dbReference type="EMBL" id="BN001302">
    <property type="protein sequence ID" value="CBF75131.1"/>
    <property type="status" value="ALT_SEQ"/>
    <property type="molecule type" value="Genomic_DNA"/>
</dbReference>
<dbReference type="RefSeq" id="XP_661507.1">
    <property type="nucleotide sequence ID" value="XM_656415.1"/>
</dbReference>
<dbReference type="SMR" id="Q5B6C7"/>
<dbReference type="STRING" id="227321.Q5B6C7"/>
<dbReference type="CAZy" id="GH3">
    <property type="family name" value="Glycoside Hydrolase Family 3"/>
</dbReference>
<dbReference type="GlyCosmos" id="Q5B6C7">
    <property type="glycosylation" value="7 sites, No reported glycans"/>
</dbReference>
<dbReference type="KEGG" id="ani:ANIA_03903"/>
<dbReference type="eggNOG" id="ENOG502SMPY">
    <property type="taxonomic scope" value="Eukaryota"/>
</dbReference>
<dbReference type="HOGENOM" id="CLU_004542_4_0_1"/>
<dbReference type="InParanoid" id="Q5B6C7"/>
<dbReference type="OrthoDB" id="47059at2759"/>
<dbReference type="UniPathway" id="UPA00696"/>
<dbReference type="Proteomes" id="UP000000560">
    <property type="component" value="Chromosome II"/>
</dbReference>
<dbReference type="GO" id="GO:0005576">
    <property type="term" value="C:extracellular region"/>
    <property type="evidence" value="ECO:0007669"/>
    <property type="project" value="UniProtKB-SubCell"/>
</dbReference>
<dbReference type="GO" id="GO:0008422">
    <property type="term" value="F:beta-glucosidase activity"/>
    <property type="evidence" value="ECO:0000318"/>
    <property type="project" value="GO_Central"/>
</dbReference>
<dbReference type="GO" id="GO:0030245">
    <property type="term" value="P:cellulose catabolic process"/>
    <property type="evidence" value="ECO:0007669"/>
    <property type="project" value="UniProtKB-UniPathway"/>
</dbReference>
<dbReference type="GO" id="GO:0009251">
    <property type="term" value="P:glucan catabolic process"/>
    <property type="evidence" value="ECO:0000318"/>
    <property type="project" value="GO_Central"/>
</dbReference>
<dbReference type="FunFam" id="3.20.20.300:FF:000006">
    <property type="entry name" value="Beta-glucosidase H"/>
    <property type="match status" value="1"/>
</dbReference>
<dbReference type="FunFam" id="2.60.40.10:FF:000495">
    <property type="entry name" value="Periplasmic beta-glucosidase"/>
    <property type="match status" value="1"/>
</dbReference>
<dbReference type="Gene3D" id="2.60.120.260">
    <property type="entry name" value="Galactose-binding domain-like"/>
    <property type="match status" value="1"/>
</dbReference>
<dbReference type="Gene3D" id="3.40.50.1700">
    <property type="entry name" value="Glycoside hydrolase family 3 C-terminal domain"/>
    <property type="match status" value="1"/>
</dbReference>
<dbReference type="Gene3D" id="3.20.20.300">
    <property type="entry name" value="Glycoside hydrolase, family 3, N-terminal domain"/>
    <property type="match status" value="1"/>
</dbReference>
<dbReference type="Gene3D" id="2.60.40.10">
    <property type="entry name" value="Immunoglobulins"/>
    <property type="match status" value="1"/>
</dbReference>
<dbReference type="InterPro" id="IPR050288">
    <property type="entry name" value="Cellulose_deg_GH3"/>
</dbReference>
<dbReference type="InterPro" id="IPR026891">
    <property type="entry name" value="Fn3-like"/>
</dbReference>
<dbReference type="InterPro" id="IPR002772">
    <property type="entry name" value="Glyco_hydro_3_C"/>
</dbReference>
<dbReference type="InterPro" id="IPR036881">
    <property type="entry name" value="Glyco_hydro_3_C_sf"/>
</dbReference>
<dbReference type="InterPro" id="IPR001764">
    <property type="entry name" value="Glyco_hydro_3_N"/>
</dbReference>
<dbReference type="InterPro" id="IPR036962">
    <property type="entry name" value="Glyco_hydro_3_N_sf"/>
</dbReference>
<dbReference type="InterPro" id="IPR017853">
    <property type="entry name" value="Glycoside_hydrolase_SF"/>
</dbReference>
<dbReference type="InterPro" id="IPR013783">
    <property type="entry name" value="Ig-like_fold"/>
</dbReference>
<dbReference type="InterPro" id="IPR037524">
    <property type="entry name" value="PA14/GLEYA"/>
</dbReference>
<dbReference type="InterPro" id="IPR011658">
    <property type="entry name" value="PA14_dom"/>
</dbReference>
<dbReference type="PANTHER" id="PTHR42715">
    <property type="entry name" value="BETA-GLUCOSIDASE"/>
    <property type="match status" value="1"/>
</dbReference>
<dbReference type="PANTHER" id="PTHR42715:SF17">
    <property type="entry name" value="BETA-GLUCOSIDASE H-RELATED"/>
    <property type="match status" value="1"/>
</dbReference>
<dbReference type="Pfam" id="PF14310">
    <property type="entry name" value="Fn3-like"/>
    <property type="match status" value="1"/>
</dbReference>
<dbReference type="Pfam" id="PF00933">
    <property type="entry name" value="Glyco_hydro_3"/>
    <property type="match status" value="1"/>
</dbReference>
<dbReference type="Pfam" id="PF01915">
    <property type="entry name" value="Glyco_hydro_3_C"/>
    <property type="match status" value="1"/>
</dbReference>
<dbReference type="Pfam" id="PF07691">
    <property type="entry name" value="PA14"/>
    <property type="match status" value="1"/>
</dbReference>
<dbReference type="PRINTS" id="PR00133">
    <property type="entry name" value="GLHYDRLASE3"/>
</dbReference>
<dbReference type="SMART" id="SM01217">
    <property type="entry name" value="Fn3_like"/>
    <property type="match status" value="1"/>
</dbReference>
<dbReference type="SMART" id="SM00758">
    <property type="entry name" value="PA14"/>
    <property type="match status" value="1"/>
</dbReference>
<dbReference type="SUPFAM" id="SSF51445">
    <property type="entry name" value="(Trans)glycosidases"/>
    <property type="match status" value="1"/>
</dbReference>
<dbReference type="SUPFAM" id="SSF52279">
    <property type="entry name" value="Beta-D-glucan exohydrolase, C-terminal domain"/>
    <property type="match status" value="1"/>
</dbReference>
<dbReference type="PROSITE" id="PS51820">
    <property type="entry name" value="PA14"/>
    <property type="match status" value="1"/>
</dbReference>
<sequence>MTRTFDIDYVLANISDQDKIALLSGIDFWHTHPIPQFNVPSVRVTDGPNGIRGTKFFAGVPAACLPCGTALGATWDRDLLRRAGELLGDECIAKGAHCWLGPTVNMQRSPLGGRGFESFSEDPYLAGVAAASMIVGCESKGIIATVKHFVGNDQEHERRAVDVIVTPRALREIYLRPFQIVARDARPGALMTSYNKVNGKHVVEDPKMYDLIRKDWGWDPLVMSDWYGTYTTIDSTNAGLDLEMPGVSRYRGKYIESAMQARLIKSSTLDARARKVLEFVQRASRTKVSEVEKGRNHPEDRALMRTLCSNSIVLLKNEENILPLPKNVKKIALIGSHIKTPAISGGGSAALKPYYASTLYDAVREALPNAEVLYETGAHAHNMLPVIDRLLSNAVIHFYNEPMTQPNRKCLGTEPVTTTAFQFMDYKLAGLNRALFWSTLIGDFTPDQSGIWDFGLSVFGTANLYINDELIIDNTTKQTKGTSFFGKGTREEIGSMKLTAGQTYKIRIEFGSANTTTMKTTGMVNFGGGAANLGASLRLDAEEMINRAVKAAEDADYAIICTGLNQDWESEGFDRPHMDLPPVGIDKMISGVLDIAAHKTVIVNQSGTPVTMPWASRAKSIVHSWYGGNETGHGIADILFGDVNPSGKLSLSWPIDVRHNPAYLNYASVGGRVLYGEDIYVGYRFYEKTGREVLFPFGHGLSYTTFAVSPEALVSPGTFTPENPSNATVKIKNIGGAAGAQVLQLYVAAPNSPTPRPQKELQGFEKVFLRPGEEKTVIIRLDKYATSFWDEIEGMWKSEAGVYEVLIGTSSEDIVARGQFEVNQTRYWSGL</sequence>
<name>BGLH_EMENI</name>
<organism>
    <name type="scientific">Emericella nidulans (strain FGSC A4 / ATCC 38163 / CBS 112.46 / NRRL 194 / M139)</name>
    <name type="common">Aspergillus nidulans</name>
    <dbReference type="NCBI Taxonomy" id="227321"/>
    <lineage>
        <taxon>Eukaryota</taxon>
        <taxon>Fungi</taxon>
        <taxon>Dikarya</taxon>
        <taxon>Ascomycota</taxon>
        <taxon>Pezizomycotina</taxon>
        <taxon>Eurotiomycetes</taxon>
        <taxon>Eurotiomycetidae</taxon>
        <taxon>Eurotiales</taxon>
        <taxon>Aspergillaceae</taxon>
        <taxon>Aspergillus</taxon>
        <taxon>Aspergillus subgen. Nidulantes</taxon>
    </lineage>
</organism>
<gene>
    <name type="primary">bglH</name>
    <name type="ORF">AN3903</name>
</gene>
<protein>
    <recommendedName>
        <fullName>Probable beta-glucosidase H</fullName>
        <ecNumber>3.2.1.21</ecNumber>
    </recommendedName>
    <alternativeName>
        <fullName>Beta-D-glucoside glucohydrolase H</fullName>
    </alternativeName>
    <alternativeName>
        <fullName>Cellobiase H</fullName>
    </alternativeName>
    <alternativeName>
        <fullName>Gentiobiase H</fullName>
    </alternativeName>
</protein>
<comment type="function">
    <text evidence="1">Beta-glucosidases are one of a number of cellulolytic enzymes involved in the degradation of cellulosic biomass. Catalyzes the last step releasing glucose from the inhibitory cellobiose (By similarity).</text>
</comment>
<comment type="catalytic activity">
    <reaction>
        <text>Hydrolysis of terminal, non-reducing beta-D-glucosyl residues with release of beta-D-glucose.</text>
        <dbReference type="EC" id="3.2.1.21"/>
    </reaction>
</comment>
<comment type="pathway">
    <text>Glycan metabolism; cellulose degradation.</text>
</comment>
<comment type="subcellular location">
    <subcellularLocation>
        <location evidence="1">Secreted</location>
    </subcellularLocation>
</comment>
<comment type="similarity">
    <text evidence="4">Belongs to the glycosyl hydrolase 3 family.</text>
</comment>
<comment type="sequence caution" evidence="4">
    <conflict type="erroneous gene model prediction">
        <sequence resource="EMBL-CDS" id="CBF75131"/>
    </conflict>
</comment>
<comment type="sequence caution" evidence="4">
    <conflict type="erroneous gene model prediction">
        <sequence resource="EMBL-CDS" id="EAA58834"/>
    </conflict>
</comment>
<feature type="chain" id="PRO_0000394881" description="Probable beta-glucosidase H">
    <location>
        <begin position="1"/>
        <end position="831"/>
    </location>
</feature>
<feature type="domain" description="PA14" evidence="3">
    <location>
        <begin position="389"/>
        <end position="549"/>
    </location>
</feature>
<feature type="active site" evidence="1">
    <location>
        <position position="225"/>
    </location>
</feature>
<feature type="glycosylation site" description="N-linked (GlcNAc...) asparagine" evidence="2">
    <location>
        <position position="13"/>
    </location>
</feature>
<feature type="glycosylation site" description="N-linked (GlcNAc...) asparagine" evidence="2">
    <location>
        <position position="474"/>
    </location>
</feature>
<feature type="glycosylation site" description="N-linked (GlcNAc...) asparagine" evidence="2">
    <location>
        <position position="514"/>
    </location>
</feature>
<feature type="glycosylation site" description="N-linked (GlcNAc...) asparagine" evidence="2">
    <location>
        <position position="604"/>
    </location>
</feature>
<feature type="glycosylation site" description="N-linked (GlcNAc...) asparagine" evidence="2">
    <location>
        <position position="629"/>
    </location>
</feature>
<feature type="glycosylation site" description="N-linked (GlcNAc...) asparagine" evidence="2">
    <location>
        <position position="726"/>
    </location>
</feature>
<feature type="glycosylation site" description="N-linked (GlcNAc...) asparagine" evidence="2">
    <location>
        <position position="823"/>
    </location>
</feature>